<sequence length="327" mass="34951">MSDRSLSELGEQGLLPLLQAFCPAEQRGDDAAILTPPAGQQLVVSSDVLVEGIHFSEATTPPAAIGWRAAAANLSDLAAMGATPAGITLALALPSDRRLSWLQQIYQGLDRCLKQYDCPLIGGDLSRSPTATLAVTALGWVNPNRVIRRSTAQVGDWIMATGTHGLSRLGLGHLLGEWTLAEPLRDQAIAAHQAPKPRLDVVPLLARSQPAGTVWRVAGMDSSDGLADAVLQICRASQVGAVIEALPLPATTSFDRDRLIQAALYGGEDFELVLCLSPDWAQALLELLGEQAQVIGQITEKPVVQLRLSDRTEILSLDRGFQHFTTH</sequence>
<dbReference type="EC" id="2.7.4.16" evidence="1"/>
<dbReference type="EMBL" id="U59235">
    <property type="protein sequence ID" value="AAB82022.1"/>
    <property type="molecule type" value="Genomic_DNA"/>
</dbReference>
<dbReference type="EMBL" id="CP000100">
    <property type="protein sequence ID" value="ABB58597.1"/>
    <property type="molecule type" value="Genomic_DNA"/>
</dbReference>
<dbReference type="PIR" id="T30275">
    <property type="entry name" value="T30275"/>
</dbReference>
<dbReference type="RefSeq" id="WP_011243853.1">
    <property type="nucleotide sequence ID" value="NZ_JACJTX010000001.1"/>
</dbReference>
<dbReference type="SMR" id="Q54757"/>
<dbReference type="STRING" id="1140.Synpcc7942_2567"/>
<dbReference type="PaxDb" id="1140-Synpcc7942_2567"/>
<dbReference type="GeneID" id="72431461"/>
<dbReference type="KEGG" id="syf:Synpcc7942_2567"/>
<dbReference type="eggNOG" id="COG0611">
    <property type="taxonomic scope" value="Bacteria"/>
</dbReference>
<dbReference type="HOGENOM" id="CLU_046964_3_0_3"/>
<dbReference type="OrthoDB" id="9802811at2"/>
<dbReference type="BioCyc" id="SYNEL:SYNPCC7942_2567-MONOMER"/>
<dbReference type="UniPathway" id="UPA00060">
    <property type="reaction ID" value="UER00142"/>
</dbReference>
<dbReference type="Proteomes" id="UP000889800">
    <property type="component" value="Chromosome"/>
</dbReference>
<dbReference type="GO" id="GO:0005524">
    <property type="term" value="F:ATP binding"/>
    <property type="evidence" value="ECO:0007669"/>
    <property type="project" value="UniProtKB-UniRule"/>
</dbReference>
<dbReference type="GO" id="GO:0000287">
    <property type="term" value="F:magnesium ion binding"/>
    <property type="evidence" value="ECO:0007669"/>
    <property type="project" value="UniProtKB-UniRule"/>
</dbReference>
<dbReference type="GO" id="GO:0009030">
    <property type="term" value="F:thiamine-phosphate kinase activity"/>
    <property type="evidence" value="ECO:0007669"/>
    <property type="project" value="UniProtKB-UniRule"/>
</dbReference>
<dbReference type="GO" id="GO:0009228">
    <property type="term" value="P:thiamine biosynthetic process"/>
    <property type="evidence" value="ECO:0007669"/>
    <property type="project" value="UniProtKB-KW"/>
</dbReference>
<dbReference type="GO" id="GO:0009229">
    <property type="term" value="P:thiamine diphosphate biosynthetic process"/>
    <property type="evidence" value="ECO:0007669"/>
    <property type="project" value="UniProtKB-UniRule"/>
</dbReference>
<dbReference type="CDD" id="cd02194">
    <property type="entry name" value="ThiL"/>
    <property type="match status" value="1"/>
</dbReference>
<dbReference type="Gene3D" id="3.90.650.10">
    <property type="entry name" value="PurM-like C-terminal domain"/>
    <property type="match status" value="1"/>
</dbReference>
<dbReference type="Gene3D" id="3.30.1330.10">
    <property type="entry name" value="PurM-like, N-terminal domain"/>
    <property type="match status" value="1"/>
</dbReference>
<dbReference type="HAMAP" id="MF_02128">
    <property type="entry name" value="TMP_kinase"/>
    <property type="match status" value="1"/>
</dbReference>
<dbReference type="InterPro" id="IPR010918">
    <property type="entry name" value="PurM-like_C_dom"/>
</dbReference>
<dbReference type="InterPro" id="IPR036676">
    <property type="entry name" value="PurM-like_C_sf"/>
</dbReference>
<dbReference type="InterPro" id="IPR016188">
    <property type="entry name" value="PurM-like_N"/>
</dbReference>
<dbReference type="InterPro" id="IPR036921">
    <property type="entry name" value="PurM-like_N_sf"/>
</dbReference>
<dbReference type="InterPro" id="IPR006283">
    <property type="entry name" value="ThiL-like"/>
</dbReference>
<dbReference type="NCBIfam" id="TIGR01379">
    <property type="entry name" value="thiL"/>
    <property type="match status" value="1"/>
</dbReference>
<dbReference type="PANTHER" id="PTHR30270">
    <property type="entry name" value="THIAMINE-MONOPHOSPHATE KINASE"/>
    <property type="match status" value="1"/>
</dbReference>
<dbReference type="PANTHER" id="PTHR30270:SF0">
    <property type="entry name" value="THIAMINE-MONOPHOSPHATE KINASE"/>
    <property type="match status" value="1"/>
</dbReference>
<dbReference type="Pfam" id="PF00586">
    <property type="entry name" value="AIRS"/>
    <property type="match status" value="1"/>
</dbReference>
<dbReference type="Pfam" id="PF02769">
    <property type="entry name" value="AIRS_C"/>
    <property type="match status" value="1"/>
</dbReference>
<dbReference type="PIRSF" id="PIRSF005303">
    <property type="entry name" value="Thiam_monoph_kin"/>
    <property type="match status" value="1"/>
</dbReference>
<dbReference type="SUPFAM" id="SSF56042">
    <property type="entry name" value="PurM C-terminal domain-like"/>
    <property type="match status" value="1"/>
</dbReference>
<dbReference type="SUPFAM" id="SSF55326">
    <property type="entry name" value="PurM N-terminal domain-like"/>
    <property type="match status" value="1"/>
</dbReference>
<reference key="1">
    <citation type="submission" date="1996-05" db="EMBL/GenBank/DDBJ databases">
        <title>Genes encoding biotin carboxyl carrier protein and elongation factor P from cyanobacterium Synechococcus sp. PCC 7942.</title>
        <authorList>
            <person name="Phung L.T."/>
            <person name="Haselkorn R."/>
        </authorList>
    </citation>
    <scope>NUCLEOTIDE SEQUENCE [GENOMIC DNA]</scope>
</reference>
<reference key="2">
    <citation type="submission" date="2005-08" db="EMBL/GenBank/DDBJ databases">
        <title>Complete sequence of chromosome 1 of Synechococcus elongatus PCC 7942.</title>
        <authorList>
            <consortium name="US DOE Joint Genome Institute"/>
            <person name="Copeland A."/>
            <person name="Lucas S."/>
            <person name="Lapidus A."/>
            <person name="Barry K."/>
            <person name="Detter J.C."/>
            <person name="Glavina T."/>
            <person name="Hammon N."/>
            <person name="Israni S."/>
            <person name="Pitluck S."/>
            <person name="Schmutz J."/>
            <person name="Larimer F."/>
            <person name="Land M."/>
            <person name="Kyrpides N."/>
            <person name="Lykidis A."/>
            <person name="Golden S."/>
            <person name="Richardson P."/>
        </authorList>
    </citation>
    <scope>NUCLEOTIDE SEQUENCE [LARGE SCALE GENOMIC DNA]</scope>
    <source>
        <strain>ATCC 33912 / PCC 7942 / FACHB-805</strain>
    </source>
</reference>
<proteinExistence type="inferred from homology"/>
<comment type="function">
    <text evidence="1">Catalyzes the ATP-dependent phosphorylation of thiamine-monophosphate (TMP) to form thiamine-pyrophosphate (TPP), the active form of vitamin B1.</text>
</comment>
<comment type="catalytic activity">
    <reaction evidence="1">
        <text>thiamine phosphate + ATP = thiamine diphosphate + ADP</text>
        <dbReference type="Rhea" id="RHEA:15913"/>
        <dbReference type="ChEBI" id="CHEBI:30616"/>
        <dbReference type="ChEBI" id="CHEBI:37575"/>
        <dbReference type="ChEBI" id="CHEBI:58937"/>
        <dbReference type="ChEBI" id="CHEBI:456216"/>
        <dbReference type="EC" id="2.7.4.16"/>
    </reaction>
</comment>
<comment type="pathway">
    <text evidence="1">Cofactor biosynthesis; thiamine diphosphate biosynthesis; thiamine diphosphate from thiamine phosphate: step 1/1.</text>
</comment>
<comment type="miscellaneous">
    <text evidence="1">Reaction mechanism of ThiL seems to utilize a direct, inline transfer of the gamma-phosphate of ATP to TMP rather than a phosphorylated enzyme intermediate.</text>
</comment>
<comment type="similarity">
    <text evidence="1">Belongs to the thiamine-monophosphate kinase family.</text>
</comment>
<evidence type="ECO:0000255" key="1">
    <source>
        <dbReference type="HAMAP-Rule" id="MF_02128"/>
    </source>
</evidence>
<accession>Q54757</accession>
<accession>Q31K22</accession>
<gene>
    <name evidence="1" type="primary">thiL</name>
    <name type="ordered locus">Synpcc7942_2567</name>
</gene>
<feature type="chain" id="PRO_0000096199" description="Thiamine-monophosphate kinase">
    <location>
        <begin position="1"/>
        <end position="327"/>
    </location>
</feature>
<feature type="binding site" evidence="1">
    <location>
        <position position="30"/>
    </location>
    <ligand>
        <name>Mg(2+)</name>
        <dbReference type="ChEBI" id="CHEBI:18420"/>
        <label>3</label>
    </ligand>
</feature>
<feature type="binding site" evidence="1">
    <location>
        <position position="30"/>
    </location>
    <ligand>
        <name>Mg(2+)</name>
        <dbReference type="ChEBI" id="CHEBI:18420"/>
        <label>4</label>
    </ligand>
</feature>
<feature type="binding site" evidence="1">
    <location>
        <position position="45"/>
    </location>
    <ligand>
        <name>Mg(2+)</name>
        <dbReference type="ChEBI" id="CHEBI:18420"/>
        <label>4</label>
    </ligand>
</feature>
<feature type="binding site" evidence="1">
    <location>
        <position position="46"/>
    </location>
    <ligand>
        <name>Mg(2+)</name>
        <dbReference type="ChEBI" id="CHEBI:18420"/>
        <label>1</label>
    </ligand>
</feature>
<feature type="binding site" evidence="1">
    <location>
        <position position="47"/>
    </location>
    <ligand>
        <name>Mg(2+)</name>
        <dbReference type="ChEBI" id="CHEBI:18420"/>
        <label>1</label>
    </ligand>
</feature>
<feature type="binding site" evidence="1">
    <location>
        <position position="47"/>
    </location>
    <ligand>
        <name>Mg(2+)</name>
        <dbReference type="ChEBI" id="CHEBI:18420"/>
        <label>2</label>
    </ligand>
</feature>
<feature type="binding site" evidence="1">
    <location>
        <position position="54"/>
    </location>
    <ligand>
        <name>substrate</name>
    </ligand>
</feature>
<feature type="binding site" evidence="1">
    <location>
        <position position="76"/>
    </location>
    <ligand>
        <name>Mg(2+)</name>
        <dbReference type="ChEBI" id="CHEBI:18420"/>
        <label>2</label>
    </ligand>
</feature>
<feature type="binding site" evidence="1">
    <location>
        <position position="76"/>
    </location>
    <ligand>
        <name>Mg(2+)</name>
        <dbReference type="ChEBI" id="CHEBI:18420"/>
        <label>3</label>
    </ligand>
</feature>
<feature type="binding site" evidence="1">
    <location>
        <position position="76"/>
    </location>
    <ligand>
        <name>Mg(2+)</name>
        <dbReference type="ChEBI" id="CHEBI:18420"/>
        <label>4</label>
    </ligand>
</feature>
<feature type="binding site" evidence="1">
    <location>
        <position position="106"/>
    </location>
    <ligand>
        <name>ATP</name>
        <dbReference type="ChEBI" id="CHEBI:30616"/>
    </ligand>
</feature>
<feature type="binding site" evidence="1">
    <location>
        <begin position="123"/>
        <end position="124"/>
    </location>
    <ligand>
        <name>ATP</name>
        <dbReference type="ChEBI" id="CHEBI:30616"/>
    </ligand>
</feature>
<feature type="binding site" evidence="1">
    <location>
        <position position="124"/>
    </location>
    <ligand>
        <name>Mg(2+)</name>
        <dbReference type="ChEBI" id="CHEBI:18420"/>
        <label>1</label>
    </ligand>
</feature>
<feature type="binding site" evidence="1">
    <location>
        <position position="149"/>
    </location>
    <ligand>
        <name>ATP</name>
        <dbReference type="ChEBI" id="CHEBI:30616"/>
    </ligand>
</feature>
<feature type="binding site" evidence="1">
    <location>
        <position position="221"/>
    </location>
    <ligand>
        <name>Mg(2+)</name>
        <dbReference type="ChEBI" id="CHEBI:18420"/>
        <label>3</label>
    </ligand>
</feature>
<feature type="binding site" evidence="1">
    <location>
        <position position="223"/>
    </location>
    <ligand>
        <name>ATP</name>
        <dbReference type="ChEBI" id="CHEBI:30616"/>
    </ligand>
</feature>
<feature type="binding site" evidence="1">
    <location>
        <position position="224"/>
    </location>
    <ligand>
        <name>Mg(2+)</name>
        <dbReference type="ChEBI" id="CHEBI:18420"/>
        <label>5</label>
    </ligand>
</feature>
<feature type="binding site" evidence="1">
    <location>
        <position position="268"/>
    </location>
    <ligand>
        <name>substrate</name>
    </ligand>
</feature>
<feature type="binding site" evidence="1">
    <location>
        <position position="321"/>
    </location>
    <ligand>
        <name>substrate</name>
    </ligand>
</feature>
<keyword id="KW-0067">ATP-binding</keyword>
<keyword id="KW-0418">Kinase</keyword>
<keyword id="KW-0460">Magnesium</keyword>
<keyword id="KW-0479">Metal-binding</keyword>
<keyword id="KW-0547">Nucleotide-binding</keyword>
<keyword id="KW-1185">Reference proteome</keyword>
<keyword id="KW-0784">Thiamine biosynthesis</keyword>
<keyword id="KW-0808">Transferase</keyword>
<organism>
    <name type="scientific">Synechococcus elongatus (strain ATCC 33912 / PCC 7942 / FACHB-805)</name>
    <name type="common">Anacystis nidulans R2</name>
    <dbReference type="NCBI Taxonomy" id="1140"/>
    <lineage>
        <taxon>Bacteria</taxon>
        <taxon>Bacillati</taxon>
        <taxon>Cyanobacteriota</taxon>
        <taxon>Cyanophyceae</taxon>
        <taxon>Synechococcales</taxon>
        <taxon>Synechococcaceae</taxon>
        <taxon>Synechococcus</taxon>
    </lineage>
</organism>
<name>THIL_SYNE7</name>
<protein>
    <recommendedName>
        <fullName evidence="1">Thiamine-monophosphate kinase</fullName>
        <shortName evidence="1">TMP kinase</shortName>
        <shortName evidence="1">Thiamine-phosphate kinase</shortName>
        <ecNumber evidence="1">2.7.4.16</ecNumber>
    </recommendedName>
</protein>